<sequence>MKSLLFSILLIYLIQLVRSEECTDKHIHCFFWSQEGECEVNPRWMKKHCQKACGTCSLTSPTPLTRQQDVPTARTFDDQQDRQFLPSRPSSIPEGCNSVMTVEAETRRIFSSGQLTARFRQQMCAEEQVAPDCSINQCFHKKYRSMDGTCNNLQNPVKGAAFTAFTRLMPAAYDDGFNTLVSASRRNRPNPREVSVFLLSSERSLPGHVNSLLMLFGQFVSHDITSNAAQNFCGCQNSGPMCASIFAPPSDRSRRCIPFTRSFPICGTGQFGRVREQLNMNTAAIDASLIYGSEAITARSLRFAAMLRTSMIGGRMFPPNTNPGSLTAGDGRAILFVGLAALHTSFLRLHNNVAARLQNMNRHWNADRIFQESRKIVGGIVQVITYQEFVPELIGDASKTILGAYNGYNPNVEIGVLNEFAAGAYRLHGMIQETYPLVNSQFQEVNRYRFIDGVNNINHVLNNIDAIYRGMMTVPVRSPQRLTTSVTERLFGGSVDMAAVNIQRGRDHGLRSYNDYRRFCNLRPITSFNDWPEVPDENVRQRIGQLYRTPDDLDFYVGGILEQPAAGSLLGATFACVIGKQFERLRDGDRFYYENPGVFTSPQLAELKRTTLSWVLCQTGDNMVRVGRRAFDIENGSRAVPCSSITGLNLEAWRE</sequence>
<comment type="function">
    <text evidence="5 6">Involved in hypodermal immune response against some types of bacterial infection. Probably utilizes H(2)O(2) produced by the NADPH oxidase bli-3. May play a role in cuticule biosynthesis.</text>
</comment>
<comment type="catalytic activity">
    <reaction evidence="1">
        <text>2 a phenolic donor + H2O2 = 2 a phenolic radical donor + 2 H2O</text>
        <dbReference type="Rhea" id="RHEA:56136"/>
        <dbReference type="ChEBI" id="CHEBI:15377"/>
        <dbReference type="ChEBI" id="CHEBI:16240"/>
        <dbReference type="ChEBI" id="CHEBI:139520"/>
        <dbReference type="ChEBI" id="CHEBI:139521"/>
        <dbReference type="EC" id="1.11.1.7"/>
    </reaction>
</comment>
<comment type="cofactor">
    <cofactor evidence="3">
        <name>heme b</name>
        <dbReference type="ChEBI" id="CHEBI:60344"/>
    </cofactor>
</comment>
<comment type="tissue specificity">
    <text evidence="5">Exclusively expressed in hypodermis.</text>
</comment>
<comment type="disruption phenotype">
    <text evidence="5">Knockouts show increased susceptibility to infection with E.faecalis but not with P.aeruginosa, increased levels of H(2)O(2) upon infection and a slightly shorter life span. Fertile animals show a bagging phenotype due to embryos being retained in the body and an increase of clec-60 mRNA levels upon infection. 50% of knockouts also have a dumpy phenotype. RNAi-mediated knockdown of the protein also results in higher susceptibility to infection by E.faecalis but not in a decreased life span or morphological changes.</text>
</comment>
<comment type="similarity">
    <text evidence="3">Belongs to the peroxidase family. XPO subfamily.</text>
</comment>
<evidence type="ECO:0000250" key="1">
    <source>
        <dbReference type="UniProtKB" id="Q23490"/>
    </source>
</evidence>
<evidence type="ECO:0000255" key="2"/>
<evidence type="ECO:0000255" key="3">
    <source>
        <dbReference type="PROSITE-ProRule" id="PRU00298"/>
    </source>
</evidence>
<evidence type="ECO:0000255" key="4">
    <source>
        <dbReference type="PROSITE-ProRule" id="PRU01005"/>
    </source>
</evidence>
<evidence type="ECO:0000269" key="5">
    <source>
    </source>
</evidence>
<evidence type="ECO:0000303" key="6">
    <source>
    </source>
</evidence>
<evidence type="ECO:0000303" key="7">
    <source>
    </source>
</evidence>
<evidence type="ECO:0000305" key="8"/>
<evidence type="ECO:0000312" key="9">
    <source>
        <dbReference type="Proteomes" id="UP000001940"/>
    </source>
</evidence>
<evidence type="ECO:0000312" key="10">
    <source>
        <dbReference type="WormBase" id="F49E12.1"/>
    </source>
</evidence>
<name>SKPO1_CAEEL</name>
<accession>Q20616</accession>
<feature type="signal peptide" evidence="2">
    <location>
        <begin position="1"/>
        <end position="19"/>
    </location>
</feature>
<feature type="chain" id="PRO_0000431239" description="Peroxidase skpo-1" evidence="2">
    <location>
        <begin position="20"/>
        <end position="655"/>
    </location>
</feature>
<feature type="domain" description="ShKT" evidence="4">
    <location>
        <begin position="22"/>
        <end position="56"/>
    </location>
</feature>
<feature type="active site" description="Proton acceptor" evidence="3">
    <location>
        <position position="222"/>
    </location>
</feature>
<feature type="binding site" description="axial binding residue" evidence="3">
    <location>
        <position position="428"/>
    </location>
    <ligand>
        <name>heme b</name>
        <dbReference type="ChEBI" id="CHEBI:60344"/>
    </ligand>
    <ligandPart>
        <name>Fe</name>
        <dbReference type="ChEBI" id="CHEBI:18248"/>
    </ligandPart>
</feature>
<feature type="site" description="Transition state stabilizer" evidence="3">
    <location>
        <position position="332"/>
    </location>
</feature>
<feature type="disulfide bond" evidence="4">
    <location>
        <begin position="22"/>
        <end position="56"/>
    </location>
</feature>
<feature type="disulfide bond" evidence="4">
    <location>
        <begin position="29"/>
        <end position="49"/>
    </location>
</feature>
<feature type="disulfide bond" evidence="4">
    <location>
        <begin position="38"/>
        <end position="53"/>
    </location>
</feature>
<feature type="disulfide bond" evidence="3">
    <location>
        <begin position="133"/>
        <end position="150"/>
    </location>
</feature>
<feature type="disulfide bond" evidence="3">
    <location>
        <begin position="520"/>
        <end position="576"/>
    </location>
</feature>
<feature type="disulfide bond" evidence="3">
    <location>
        <begin position="617"/>
        <end position="642"/>
    </location>
</feature>
<reference evidence="9" key="1">
    <citation type="journal article" date="1998" name="Science">
        <title>Genome sequence of the nematode C. elegans: a platform for investigating biology.</title>
        <authorList>
            <consortium name="The C. elegans sequencing consortium"/>
        </authorList>
    </citation>
    <scope>NUCLEOTIDE SEQUENCE [LARGE SCALE GENOMIC DNA]</scope>
    <source>
        <strain evidence="9">Bristol N2</strain>
    </source>
</reference>
<reference evidence="8" key="2">
    <citation type="journal article" date="2014" name="Genetics">
        <title>The SKPO-1 peroxidase functions in the hypodermis to protect Caenorhabditis elegans from bacterial infection.</title>
        <authorList>
            <person name="Tiller G.R."/>
            <person name="Garsin D.A."/>
        </authorList>
    </citation>
    <scope>FUNCTION</scope>
    <scope>TISSUE SPECIFICITY</scope>
    <scope>DISRUPTION PHENOTYPE</scope>
</reference>
<proteinExistence type="evidence at transcript level"/>
<dbReference type="EC" id="1.11.1.7" evidence="1"/>
<dbReference type="EMBL" id="Z66520">
    <property type="protein sequence ID" value="CAA91388.1"/>
    <property type="molecule type" value="Genomic_DNA"/>
</dbReference>
<dbReference type="PIR" id="T22448">
    <property type="entry name" value="T22448"/>
</dbReference>
<dbReference type="RefSeq" id="NP_495768.1">
    <property type="nucleotide sequence ID" value="NM_063367.8"/>
</dbReference>
<dbReference type="SMR" id="Q20616"/>
<dbReference type="BioGRID" id="39669">
    <property type="interactions" value="3"/>
</dbReference>
<dbReference type="FunCoup" id="Q20616">
    <property type="interactions" value="14"/>
</dbReference>
<dbReference type="STRING" id="6239.F49E12.1.1"/>
<dbReference type="PeroxiBase" id="4139">
    <property type="entry name" value="CelPxd03"/>
</dbReference>
<dbReference type="PaxDb" id="6239-F49E12.1"/>
<dbReference type="PeptideAtlas" id="Q20616"/>
<dbReference type="EnsemblMetazoa" id="F49E12.1.1">
    <property type="protein sequence ID" value="F49E12.1.1"/>
    <property type="gene ID" value="WBGene00009897"/>
</dbReference>
<dbReference type="GeneID" id="174340"/>
<dbReference type="KEGG" id="cel:CELE_F49E12.1"/>
<dbReference type="UCSC" id="F49E12.1">
    <property type="organism name" value="c. elegans"/>
</dbReference>
<dbReference type="AGR" id="WB:WBGene00009897"/>
<dbReference type="CTD" id="174340"/>
<dbReference type="WormBase" id="F49E12.1">
    <property type="protein sequence ID" value="CE03378"/>
    <property type="gene ID" value="WBGene00009897"/>
    <property type="gene designation" value="skpo-1"/>
</dbReference>
<dbReference type="eggNOG" id="KOG2408">
    <property type="taxonomic scope" value="Eukaryota"/>
</dbReference>
<dbReference type="HOGENOM" id="CLU_006087_4_0_1"/>
<dbReference type="InParanoid" id="Q20616"/>
<dbReference type="OMA" id="NRYRFID"/>
<dbReference type="OrthoDB" id="823504at2759"/>
<dbReference type="PhylomeDB" id="Q20616"/>
<dbReference type="PRO" id="PR:Q20616"/>
<dbReference type="Proteomes" id="UP000001940">
    <property type="component" value="Chromosome II"/>
</dbReference>
<dbReference type="Bgee" id="WBGene00009897">
    <property type="expression patterns" value="Expressed in germ line (C elegans) and 4 other cell types or tissues"/>
</dbReference>
<dbReference type="GO" id="GO:0005615">
    <property type="term" value="C:extracellular space"/>
    <property type="evidence" value="ECO:0000318"/>
    <property type="project" value="GO_Central"/>
</dbReference>
<dbReference type="GO" id="GO:0020037">
    <property type="term" value="F:heme binding"/>
    <property type="evidence" value="ECO:0007669"/>
    <property type="project" value="InterPro"/>
</dbReference>
<dbReference type="GO" id="GO:0140825">
    <property type="term" value="F:lactoperoxidase activity"/>
    <property type="evidence" value="ECO:0007669"/>
    <property type="project" value="UniProtKB-EC"/>
</dbReference>
<dbReference type="GO" id="GO:0046872">
    <property type="term" value="F:metal ion binding"/>
    <property type="evidence" value="ECO:0007669"/>
    <property type="project" value="UniProtKB-KW"/>
</dbReference>
<dbReference type="GO" id="GO:0004601">
    <property type="term" value="F:peroxidase activity"/>
    <property type="evidence" value="ECO:0000315"/>
    <property type="project" value="UniProtKB"/>
</dbReference>
<dbReference type="GO" id="GO:0050830">
    <property type="term" value="P:defense response to Gram-positive bacterium"/>
    <property type="evidence" value="ECO:0000315"/>
    <property type="project" value="UniProtKB"/>
</dbReference>
<dbReference type="GO" id="GO:0008340">
    <property type="term" value="P:determination of adult lifespan"/>
    <property type="evidence" value="ECO:0000315"/>
    <property type="project" value="UniProtKB"/>
</dbReference>
<dbReference type="GO" id="GO:0045087">
    <property type="term" value="P:innate immune response"/>
    <property type="evidence" value="ECO:0007669"/>
    <property type="project" value="UniProtKB-KW"/>
</dbReference>
<dbReference type="GO" id="GO:0010629">
    <property type="term" value="P:negative regulation of gene expression"/>
    <property type="evidence" value="ECO:0000315"/>
    <property type="project" value="UniProtKB"/>
</dbReference>
<dbReference type="GO" id="GO:0006979">
    <property type="term" value="P:response to oxidative stress"/>
    <property type="evidence" value="ECO:0007669"/>
    <property type="project" value="InterPro"/>
</dbReference>
<dbReference type="CDD" id="cd09823">
    <property type="entry name" value="peroxinectin_like"/>
    <property type="match status" value="1"/>
</dbReference>
<dbReference type="FunFam" id="1.10.640.10:FF:000007">
    <property type="entry name" value="Peroxidase mlt-7"/>
    <property type="match status" value="1"/>
</dbReference>
<dbReference type="Gene3D" id="1.10.10.1940">
    <property type="match status" value="1"/>
</dbReference>
<dbReference type="Gene3D" id="1.10.640.10">
    <property type="entry name" value="Haem peroxidase domain superfamily, animal type"/>
    <property type="match status" value="1"/>
</dbReference>
<dbReference type="InterPro" id="IPR019791">
    <property type="entry name" value="Haem_peroxidase_animal"/>
</dbReference>
<dbReference type="InterPro" id="IPR010255">
    <property type="entry name" value="Haem_peroxidase_sf"/>
</dbReference>
<dbReference type="InterPro" id="IPR037120">
    <property type="entry name" value="Haem_peroxidase_sf_animal"/>
</dbReference>
<dbReference type="InterPro" id="IPR003582">
    <property type="entry name" value="ShKT_dom"/>
</dbReference>
<dbReference type="PANTHER" id="PTHR11475">
    <property type="entry name" value="OXIDASE/PEROXIDASE"/>
    <property type="match status" value="1"/>
</dbReference>
<dbReference type="PANTHER" id="PTHR11475:SF22">
    <property type="entry name" value="PEROXIDASE SKPO-1"/>
    <property type="match status" value="1"/>
</dbReference>
<dbReference type="Pfam" id="PF03098">
    <property type="entry name" value="An_peroxidase"/>
    <property type="match status" value="1"/>
</dbReference>
<dbReference type="Pfam" id="PF01549">
    <property type="entry name" value="ShK"/>
    <property type="match status" value="1"/>
</dbReference>
<dbReference type="PRINTS" id="PR00457">
    <property type="entry name" value="ANPEROXIDASE"/>
</dbReference>
<dbReference type="SMART" id="SM00254">
    <property type="entry name" value="ShKT"/>
    <property type="match status" value="1"/>
</dbReference>
<dbReference type="SUPFAM" id="SSF48113">
    <property type="entry name" value="Heme-dependent peroxidases"/>
    <property type="match status" value="1"/>
</dbReference>
<dbReference type="PROSITE" id="PS50292">
    <property type="entry name" value="PEROXIDASE_3"/>
    <property type="match status" value="1"/>
</dbReference>
<dbReference type="PROSITE" id="PS51670">
    <property type="entry name" value="SHKT"/>
    <property type="match status" value="1"/>
</dbReference>
<keyword id="KW-1015">Disulfide bond</keyword>
<keyword id="KW-0349">Heme</keyword>
<keyword id="KW-0391">Immunity</keyword>
<keyword id="KW-0399">Innate immunity</keyword>
<keyword id="KW-0408">Iron</keyword>
<keyword id="KW-0479">Metal-binding</keyword>
<keyword id="KW-0560">Oxidoreductase</keyword>
<keyword id="KW-0575">Peroxidase</keyword>
<keyword id="KW-1185">Reference proteome</keyword>
<keyword id="KW-0732">Signal</keyword>
<organism evidence="9">
    <name type="scientific">Caenorhabditis elegans</name>
    <dbReference type="NCBI Taxonomy" id="6239"/>
    <lineage>
        <taxon>Eukaryota</taxon>
        <taxon>Metazoa</taxon>
        <taxon>Ecdysozoa</taxon>
        <taxon>Nematoda</taxon>
        <taxon>Chromadorea</taxon>
        <taxon>Rhabditida</taxon>
        <taxon>Rhabditina</taxon>
        <taxon>Rhabditomorpha</taxon>
        <taxon>Rhabditoidea</taxon>
        <taxon>Rhabditidae</taxon>
        <taxon>Peloderinae</taxon>
        <taxon>Caenorhabditis</taxon>
    </lineage>
</organism>
<gene>
    <name evidence="10" type="primary">skpo-1</name>
    <name evidence="10" type="ORF">F49E12.1</name>
</gene>
<protein>
    <recommendedName>
        <fullName evidence="7">Peroxidase skpo-1</fullName>
        <ecNumber evidence="1">1.11.1.7</ecNumber>
    </recommendedName>
    <alternativeName>
        <fullName evidence="10">ShKT and peroxidase domain-containing protein 1</fullName>
    </alternativeName>
</protein>